<organism>
    <name type="scientific">Methanococcus aeolicus (strain ATCC BAA-1280 / DSM 17508 / OCM 812 / Nankai-3)</name>
    <dbReference type="NCBI Taxonomy" id="419665"/>
    <lineage>
        <taxon>Archaea</taxon>
        <taxon>Methanobacteriati</taxon>
        <taxon>Methanobacteriota</taxon>
        <taxon>Methanomada group</taxon>
        <taxon>Methanococci</taxon>
        <taxon>Methanococcales</taxon>
        <taxon>Methanococcaceae</taxon>
        <taxon>Methanococcus</taxon>
    </lineage>
</organism>
<gene>
    <name evidence="1" type="primary">rpl14</name>
    <name type="ordered locus">Maeo_1394</name>
</gene>
<evidence type="ECO:0000255" key="1">
    <source>
        <dbReference type="HAMAP-Rule" id="MF_01367"/>
    </source>
</evidence>
<evidence type="ECO:0000305" key="2"/>
<comment type="function">
    <text evidence="1">Binds to 23S rRNA. Forms part of two intersubunit bridges in the 70S ribosome.</text>
</comment>
<comment type="subunit">
    <text evidence="1">Part of the 50S ribosomal subunit. Forms a cluster with proteins L3 and L24e, part of which may contact the 16S rRNA in 2 intersubunit bridges.</text>
</comment>
<comment type="similarity">
    <text evidence="1">Belongs to the universal ribosomal protein uL14 family.</text>
</comment>
<feature type="chain" id="PRO_1000055627" description="Large ribosomal subunit protein uL14">
    <location>
        <begin position="1"/>
        <end position="132"/>
    </location>
</feature>
<name>RL14_META3</name>
<protein>
    <recommendedName>
        <fullName evidence="1">Large ribosomal subunit protein uL14</fullName>
    </recommendedName>
    <alternativeName>
        <fullName evidence="2">50S ribosomal protein L14</fullName>
    </alternativeName>
</protein>
<keyword id="KW-0687">Ribonucleoprotein</keyword>
<keyword id="KW-0689">Ribosomal protein</keyword>
<keyword id="KW-0694">RNA-binding</keyword>
<keyword id="KW-0699">rRNA-binding</keyword>
<dbReference type="EMBL" id="CP000743">
    <property type="protein sequence ID" value="ABR56970.1"/>
    <property type="molecule type" value="Genomic_DNA"/>
</dbReference>
<dbReference type="RefSeq" id="WP_011974102.1">
    <property type="nucleotide sequence ID" value="NC_009635.1"/>
</dbReference>
<dbReference type="SMR" id="A6UWU8"/>
<dbReference type="STRING" id="419665.Maeo_1394"/>
<dbReference type="GeneID" id="5327584"/>
<dbReference type="KEGG" id="mae:Maeo_1394"/>
<dbReference type="eggNOG" id="arCOG04095">
    <property type="taxonomic scope" value="Archaea"/>
</dbReference>
<dbReference type="HOGENOM" id="CLU_095071_3_1_2"/>
<dbReference type="OrthoDB" id="23569at2157"/>
<dbReference type="Proteomes" id="UP000001106">
    <property type="component" value="Chromosome"/>
</dbReference>
<dbReference type="GO" id="GO:0022625">
    <property type="term" value="C:cytosolic large ribosomal subunit"/>
    <property type="evidence" value="ECO:0007669"/>
    <property type="project" value="TreeGrafter"/>
</dbReference>
<dbReference type="GO" id="GO:0070180">
    <property type="term" value="F:large ribosomal subunit rRNA binding"/>
    <property type="evidence" value="ECO:0007669"/>
    <property type="project" value="TreeGrafter"/>
</dbReference>
<dbReference type="GO" id="GO:0003735">
    <property type="term" value="F:structural constituent of ribosome"/>
    <property type="evidence" value="ECO:0007669"/>
    <property type="project" value="InterPro"/>
</dbReference>
<dbReference type="GO" id="GO:0006412">
    <property type="term" value="P:translation"/>
    <property type="evidence" value="ECO:0007669"/>
    <property type="project" value="UniProtKB-UniRule"/>
</dbReference>
<dbReference type="CDD" id="cd00337">
    <property type="entry name" value="Ribosomal_uL14"/>
    <property type="match status" value="1"/>
</dbReference>
<dbReference type="FunFam" id="2.40.150.20:FF:000007">
    <property type="entry name" value="50S ribosomal protein L14"/>
    <property type="match status" value="1"/>
</dbReference>
<dbReference type="Gene3D" id="2.40.150.20">
    <property type="entry name" value="Ribosomal protein L14"/>
    <property type="match status" value="1"/>
</dbReference>
<dbReference type="HAMAP" id="MF_01367">
    <property type="entry name" value="Ribosomal_uL14"/>
    <property type="match status" value="1"/>
</dbReference>
<dbReference type="InterPro" id="IPR000218">
    <property type="entry name" value="Ribosomal_uL14"/>
</dbReference>
<dbReference type="InterPro" id="IPR019971">
    <property type="entry name" value="Ribosomal_uL14_arc"/>
</dbReference>
<dbReference type="InterPro" id="IPR019972">
    <property type="entry name" value="Ribosomal_uL14_CS"/>
</dbReference>
<dbReference type="InterPro" id="IPR036853">
    <property type="entry name" value="Ribosomal_uL14_sf"/>
</dbReference>
<dbReference type="NCBIfam" id="NF006344">
    <property type="entry name" value="PRK08571.1"/>
    <property type="match status" value="1"/>
</dbReference>
<dbReference type="NCBIfam" id="TIGR03673">
    <property type="entry name" value="uL14_arch"/>
    <property type="match status" value="1"/>
</dbReference>
<dbReference type="PANTHER" id="PTHR11761">
    <property type="entry name" value="50S/60S RIBOSOMAL PROTEIN L14/L23"/>
    <property type="match status" value="1"/>
</dbReference>
<dbReference type="PANTHER" id="PTHR11761:SF8">
    <property type="entry name" value="LARGE RIBOSOMAL SUBUNIT PROTEIN UL14"/>
    <property type="match status" value="1"/>
</dbReference>
<dbReference type="Pfam" id="PF00238">
    <property type="entry name" value="Ribosomal_L14"/>
    <property type="match status" value="1"/>
</dbReference>
<dbReference type="SMART" id="SM01374">
    <property type="entry name" value="Ribosomal_L14"/>
    <property type="match status" value="1"/>
</dbReference>
<dbReference type="SUPFAM" id="SSF50193">
    <property type="entry name" value="Ribosomal protein L14"/>
    <property type="match status" value="1"/>
</dbReference>
<dbReference type="PROSITE" id="PS00049">
    <property type="entry name" value="RIBOSOMAL_L14"/>
    <property type="match status" value="1"/>
</dbReference>
<reference key="1">
    <citation type="submission" date="2007-06" db="EMBL/GenBank/DDBJ databases">
        <title>Complete sequence of Methanococcus aeolicus Nankai-3.</title>
        <authorList>
            <consortium name="US DOE Joint Genome Institute"/>
            <person name="Copeland A."/>
            <person name="Lucas S."/>
            <person name="Lapidus A."/>
            <person name="Barry K."/>
            <person name="Glavina del Rio T."/>
            <person name="Dalin E."/>
            <person name="Tice H."/>
            <person name="Pitluck S."/>
            <person name="Chain P."/>
            <person name="Malfatti S."/>
            <person name="Shin M."/>
            <person name="Vergez L."/>
            <person name="Schmutz J."/>
            <person name="Larimer F."/>
            <person name="Land M."/>
            <person name="Hauser L."/>
            <person name="Kyrpides N."/>
            <person name="Lykidis A."/>
            <person name="Sieprawska-Lupa M."/>
            <person name="Whitman W.B."/>
            <person name="Richardson P."/>
        </authorList>
    </citation>
    <scope>NUCLEOTIDE SEQUENCE [LARGE SCALE GENOMIC DNA]</scope>
    <source>
        <strain>ATCC BAA-1280 / DSM 17508 / OCM 812 / Nankai-3</strain>
    </source>
</reference>
<sequence length="132" mass="14175">MKGFGSKVIRSLPNGARLICADNTGAKELEIIAVKGYKGVARRLPAGGVGSLVFVSVKKGTPEMRKQVLPAIIIRQKKEYRRPDGSRVKFEDNAAVIVTPEGSPKGSEIKGPVAKEAAERWAGVSRLAKIIH</sequence>
<accession>A6UWU8</accession>
<proteinExistence type="inferred from homology"/>